<reference key="1">
    <citation type="submission" date="2006-08" db="EMBL/GenBank/DDBJ databases">
        <title>Complete sequence of chromosome 1 of Burkholderia cepacia AMMD.</title>
        <authorList>
            <person name="Copeland A."/>
            <person name="Lucas S."/>
            <person name="Lapidus A."/>
            <person name="Barry K."/>
            <person name="Detter J.C."/>
            <person name="Glavina del Rio T."/>
            <person name="Hammon N."/>
            <person name="Israni S."/>
            <person name="Pitluck S."/>
            <person name="Bruce D."/>
            <person name="Chain P."/>
            <person name="Malfatti S."/>
            <person name="Shin M."/>
            <person name="Vergez L."/>
            <person name="Schmutz J."/>
            <person name="Larimer F."/>
            <person name="Land M."/>
            <person name="Hauser L."/>
            <person name="Kyrpides N."/>
            <person name="Kim E."/>
            <person name="Parke J."/>
            <person name="Coenye T."/>
            <person name="Konstantinidis K."/>
            <person name="Ramette A."/>
            <person name="Tiedje J."/>
            <person name="Richardson P."/>
        </authorList>
    </citation>
    <scope>NUCLEOTIDE SEQUENCE [LARGE SCALE GENOMIC DNA]</scope>
    <source>
        <strain>ATCC BAA-244 / DSM 16087 / CCUG 44356 / LMG 19182 / AMMD</strain>
    </source>
</reference>
<dbReference type="EC" id="2.7.8.7" evidence="1"/>
<dbReference type="EMBL" id="CP000440">
    <property type="protein sequence ID" value="ABI86573.1"/>
    <property type="molecule type" value="Genomic_DNA"/>
</dbReference>
<dbReference type="RefSeq" id="WP_011656357.1">
    <property type="nucleotide sequence ID" value="NC_008390.1"/>
</dbReference>
<dbReference type="SMR" id="Q0BH00"/>
<dbReference type="GeneID" id="93083579"/>
<dbReference type="KEGG" id="bam:Bamb_1014"/>
<dbReference type="PATRIC" id="fig|339670.21.peg.558"/>
<dbReference type="eggNOG" id="COG0736">
    <property type="taxonomic scope" value="Bacteria"/>
</dbReference>
<dbReference type="Proteomes" id="UP000000662">
    <property type="component" value="Chromosome 1"/>
</dbReference>
<dbReference type="GO" id="GO:0005737">
    <property type="term" value="C:cytoplasm"/>
    <property type="evidence" value="ECO:0007669"/>
    <property type="project" value="UniProtKB-SubCell"/>
</dbReference>
<dbReference type="GO" id="GO:0008897">
    <property type="term" value="F:holo-[acyl-carrier-protein] synthase activity"/>
    <property type="evidence" value="ECO:0007669"/>
    <property type="project" value="UniProtKB-UniRule"/>
</dbReference>
<dbReference type="GO" id="GO:0000287">
    <property type="term" value="F:magnesium ion binding"/>
    <property type="evidence" value="ECO:0007669"/>
    <property type="project" value="UniProtKB-UniRule"/>
</dbReference>
<dbReference type="GO" id="GO:0006633">
    <property type="term" value="P:fatty acid biosynthetic process"/>
    <property type="evidence" value="ECO:0007669"/>
    <property type="project" value="UniProtKB-UniRule"/>
</dbReference>
<dbReference type="Gene3D" id="3.90.470.20">
    <property type="entry name" value="4'-phosphopantetheinyl transferase domain"/>
    <property type="match status" value="1"/>
</dbReference>
<dbReference type="HAMAP" id="MF_00101">
    <property type="entry name" value="AcpS"/>
    <property type="match status" value="1"/>
</dbReference>
<dbReference type="InterPro" id="IPR008278">
    <property type="entry name" value="4-PPantetheinyl_Trfase_dom"/>
</dbReference>
<dbReference type="InterPro" id="IPR037143">
    <property type="entry name" value="4-PPantetheinyl_Trfase_dom_sf"/>
</dbReference>
<dbReference type="InterPro" id="IPR002582">
    <property type="entry name" value="ACPS"/>
</dbReference>
<dbReference type="InterPro" id="IPR004568">
    <property type="entry name" value="Ppantetheine-prot_Trfase_dom"/>
</dbReference>
<dbReference type="NCBIfam" id="TIGR00516">
    <property type="entry name" value="acpS"/>
    <property type="match status" value="1"/>
</dbReference>
<dbReference type="NCBIfam" id="TIGR00556">
    <property type="entry name" value="pantethn_trn"/>
    <property type="match status" value="1"/>
</dbReference>
<dbReference type="Pfam" id="PF01648">
    <property type="entry name" value="ACPS"/>
    <property type="match status" value="1"/>
</dbReference>
<dbReference type="SUPFAM" id="SSF56214">
    <property type="entry name" value="4'-phosphopantetheinyl transferase"/>
    <property type="match status" value="1"/>
</dbReference>
<accession>Q0BH00</accession>
<keyword id="KW-0963">Cytoplasm</keyword>
<keyword id="KW-0275">Fatty acid biosynthesis</keyword>
<keyword id="KW-0276">Fatty acid metabolism</keyword>
<keyword id="KW-0444">Lipid biosynthesis</keyword>
<keyword id="KW-0443">Lipid metabolism</keyword>
<keyword id="KW-0460">Magnesium</keyword>
<keyword id="KW-0479">Metal-binding</keyword>
<keyword id="KW-0808">Transferase</keyword>
<name>ACPS_BURCM</name>
<protein>
    <recommendedName>
        <fullName evidence="1">Holo-[acyl-carrier-protein] synthase</fullName>
        <shortName evidence="1">Holo-ACP synthase</shortName>
        <ecNumber evidence="1">2.7.8.7</ecNumber>
    </recommendedName>
    <alternativeName>
        <fullName evidence="1">4'-phosphopantetheinyl transferase AcpS</fullName>
    </alternativeName>
</protein>
<gene>
    <name evidence="1" type="primary">acpS</name>
    <name type="ordered locus">Bamb_1014</name>
</gene>
<sequence length="146" mass="15817">MAIYGIGTDVVQISRIAAVLERTGGRFAEKVLGPDELRVFHARRARSEARGIAFLATRFSAKEAFSKAIGLGMHWPMTWRALQTLNQRSGEPYVVASGELADWLAARGITARVTVSDERDYAVSFVVTETDAAPPPAPAPVSRTTS</sequence>
<feature type="chain" id="PRO_1000008396" description="Holo-[acyl-carrier-protein] synthase">
    <location>
        <begin position="1"/>
        <end position="146"/>
    </location>
</feature>
<feature type="binding site" evidence="1">
    <location>
        <position position="9"/>
    </location>
    <ligand>
        <name>Mg(2+)</name>
        <dbReference type="ChEBI" id="CHEBI:18420"/>
    </ligand>
</feature>
<feature type="binding site" evidence="1">
    <location>
        <position position="63"/>
    </location>
    <ligand>
        <name>Mg(2+)</name>
        <dbReference type="ChEBI" id="CHEBI:18420"/>
    </ligand>
</feature>
<proteinExistence type="inferred from homology"/>
<organism>
    <name type="scientific">Burkholderia ambifaria (strain ATCC BAA-244 / DSM 16087 / CCUG 44356 / LMG 19182 / AMMD)</name>
    <name type="common">Burkholderia cepacia (strain AMMD)</name>
    <dbReference type="NCBI Taxonomy" id="339670"/>
    <lineage>
        <taxon>Bacteria</taxon>
        <taxon>Pseudomonadati</taxon>
        <taxon>Pseudomonadota</taxon>
        <taxon>Betaproteobacteria</taxon>
        <taxon>Burkholderiales</taxon>
        <taxon>Burkholderiaceae</taxon>
        <taxon>Burkholderia</taxon>
        <taxon>Burkholderia cepacia complex</taxon>
    </lineage>
</organism>
<evidence type="ECO:0000255" key="1">
    <source>
        <dbReference type="HAMAP-Rule" id="MF_00101"/>
    </source>
</evidence>
<comment type="function">
    <text evidence="1">Transfers the 4'-phosphopantetheine moiety from coenzyme A to a Ser of acyl-carrier-protein.</text>
</comment>
<comment type="catalytic activity">
    <reaction evidence="1">
        <text>apo-[ACP] + CoA = holo-[ACP] + adenosine 3',5'-bisphosphate + H(+)</text>
        <dbReference type="Rhea" id="RHEA:12068"/>
        <dbReference type="Rhea" id="RHEA-COMP:9685"/>
        <dbReference type="Rhea" id="RHEA-COMP:9690"/>
        <dbReference type="ChEBI" id="CHEBI:15378"/>
        <dbReference type="ChEBI" id="CHEBI:29999"/>
        <dbReference type="ChEBI" id="CHEBI:57287"/>
        <dbReference type="ChEBI" id="CHEBI:58343"/>
        <dbReference type="ChEBI" id="CHEBI:64479"/>
        <dbReference type="EC" id="2.7.8.7"/>
    </reaction>
</comment>
<comment type="cofactor">
    <cofactor evidence="1">
        <name>Mg(2+)</name>
        <dbReference type="ChEBI" id="CHEBI:18420"/>
    </cofactor>
</comment>
<comment type="subcellular location">
    <subcellularLocation>
        <location evidence="1">Cytoplasm</location>
    </subcellularLocation>
</comment>
<comment type="similarity">
    <text evidence="1">Belongs to the P-Pant transferase superfamily. AcpS family.</text>
</comment>